<organism>
    <name type="scientific">Danio rerio</name>
    <name type="common">Zebrafish</name>
    <name type="synonym">Brachydanio rerio</name>
    <dbReference type="NCBI Taxonomy" id="7955"/>
    <lineage>
        <taxon>Eukaryota</taxon>
        <taxon>Metazoa</taxon>
        <taxon>Chordata</taxon>
        <taxon>Craniata</taxon>
        <taxon>Vertebrata</taxon>
        <taxon>Euteleostomi</taxon>
        <taxon>Actinopterygii</taxon>
        <taxon>Neopterygii</taxon>
        <taxon>Teleostei</taxon>
        <taxon>Ostariophysi</taxon>
        <taxon>Cypriniformes</taxon>
        <taxon>Danionidae</taxon>
        <taxon>Danioninae</taxon>
        <taxon>Danio</taxon>
    </lineage>
</organism>
<sequence>METQLQSIFEDVVKTEVIEEAFAGMFMDSPEDEKTKLTSCLGAFRQFWSTLPQESHEQCVQWIVRFIHGQHSPKRIAFLYDCLAMAVETSLLPPRMVCQALISSDSLEWERTQLWALTFKLIRKIIGGVDYKGVRDLLKAVLDKIQTIPNFVSSAVVQQLLAAREVVEYILDRNACLLPAYFAVTEIRKLCPEGALSHWLLGSLISDFVDSFRPTARINSICGRCSLLPVVNNSGAICNSWKLDPTTLRFPLRGMLPYDKDLFDPQTGLLRYVLEQPYSRDMVCNMLGLNKQHKQRCPVLEDQLVDLVVYAMERSETEEQFDDGGTSQLLWQHLSSQLIFFVLFQFASFPHMVLSLHQKLAGRGLIKGRDHLMWVLLQFISGSIQKNALGDFLPVMKLFDLLYPEKECIPVPDINKPQSTHAFAMTCIWIHLNRKAQNDNSKLQIPIPHSLKLHHEFLQQSLRNKSLPMTDYKIALLCNAYSTNSECFTLPMGVLVETIYGNGSMRITLPGTNCMASGSVTPLPMNLLDSLTVHAKMSLIHSIATRVIKLAHAKSSLALAPALVETYSRLLVYMEIESLGIKGFISQLLPNVFKSHAWGILHTLLEMFSYRMHHIQPHYRVQLLSHLHSLAAVPQTNQNQLHLCVESTALRLITALGSSEVQPQFTRFLNDPKTVLSAESEELNRALILTLARATHVTDFFTGSDSIQGTWCKDILQTIMNFTPHNWASHTLSCFPAPLQAFFKQNNVPQESRFNLKKNVEEEYRKWKSMTNENDIITHFSMQGSPPLFLCLLWKMLLETDHINQIGFRVLERIGARALVAHVRTFADFLVYEFSTSAGGQQLNKCIEILNDMVWKYNIVTLDRLILCLAMRSHEGNEAQVCYFIIQLLLLKPNDFRNRVSDFVKENAPEHWLQSDWHTKHMTYHKKYPEKLYFEGLAEQVNPPIQLQSQYLPIYFGNVCLRFLPVFDIVIHRFLELLPVSKSLETLLDHLGGLYKFHDRPVTYLYNTLHYYERHLRDRTNLKRKLVHAIMSSLKDNRTPGWCLSETYLKCGMNAREDNVWIPDDTYYCKLIGRLVDTMAGKSPGPFPNCDWRFNEFPNPAAHALHVTCVELMALAVPGKDVGNALLNVVLKSQPLVPRENITAWMNAIGLVITALPEPYWIVLHDRIVSVISSAVLSSGSDWLGYPFQLLDFTACHQSYSEMHCSYVLALAHAVWHHSSIGQLSLIPKFLSEVLKPIVKTEFQLLYVYHLVGPFLQRFQQERTRCMLEIGVAFYEMLQAVDQHSNHLAYMDPICDFLYHIKYMFTGDSVKDQVERIICSLRPAMRLRLRFITHISKMEPAAVPVSNSSSVQQTSSASSPTAQSTAGAAIPLSVTQ</sequence>
<feature type="chain" id="PRO_0000305933" description="Mediator of RNA polymerase II transcription subunit 23">
    <location>
        <begin position="1"/>
        <end position="1376"/>
    </location>
</feature>
<feature type="region of interest" description="Disordered" evidence="2">
    <location>
        <begin position="1346"/>
        <end position="1376"/>
    </location>
</feature>
<feature type="compositionally biased region" description="Low complexity" evidence="2">
    <location>
        <begin position="1346"/>
        <end position="1369"/>
    </location>
</feature>
<feature type="splice variant" id="VSP_028386" description="In isoform 2." evidence="3">
    <location>
        <begin position="1"/>
        <end position="24"/>
    </location>
</feature>
<dbReference type="EMBL" id="BX072559">
    <property type="protein sequence ID" value="CAX13819.1"/>
    <property type="molecule type" value="Genomic_DNA"/>
</dbReference>
<dbReference type="EMBL" id="BC080264">
    <property type="protein sequence ID" value="AAH80264.1"/>
    <property type="molecule type" value="mRNA"/>
</dbReference>
<dbReference type="RefSeq" id="NP_001003990.1">
    <property type="nucleotide sequence ID" value="NM_001003990.1"/>
</dbReference>
<dbReference type="SMR" id="Q5RIW8"/>
<dbReference type="FunCoup" id="Q5RIW8">
    <property type="interactions" value="2238"/>
</dbReference>
<dbReference type="STRING" id="7955.ENSDARP00000116237"/>
<dbReference type="PaxDb" id="7955-ENSDARP00000116237"/>
<dbReference type="Ensembl" id="ENSDART00000135760">
    <molecule id="Q5RIW8-1"/>
    <property type="protein sequence ID" value="ENSDARP00000119918"/>
    <property type="gene ID" value="ENSDARG00000029157"/>
</dbReference>
<dbReference type="AGR" id="ZFIN:ZDB-GENE-040724-82"/>
<dbReference type="ZFIN" id="ZDB-GENE-040724-82">
    <property type="gene designation" value="med23"/>
</dbReference>
<dbReference type="eggNOG" id="KOG1883">
    <property type="taxonomic scope" value="Eukaryota"/>
</dbReference>
<dbReference type="HOGENOM" id="CLU_002773_0_0_1"/>
<dbReference type="InParanoid" id="Q5RIW8"/>
<dbReference type="OrthoDB" id="9982951at2759"/>
<dbReference type="PhylomeDB" id="Q5RIW8"/>
<dbReference type="PRO" id="PR:Q5RIW8"/>
<dbReference type="Proteomes" id="UP000000437">
    <property type="component" value="Chromosome 20"/>
</dbReference>
<dbReference type="Bgee" id="ENSDARG00000029157">
    <property type="expression patterns" value="Expressed in gastrula and 22 other cell types or tissues"/>
</dbReference>
<dbReference type="ExpressionAtlas" id="Q5RIW8">
    <property type="expression patterns" value="baseline and differential"/>
</dbReference>
<dbReference type="GO" id="GO:0016592">
    <property type="term" value="C:mediator complex"/>
    <property type="evidence" value="ECO:0000318"/>
    <property type="project" value="GO_Central"/>
</dbReference>
<dbReference type="GO" id="GO:0005667">
    <property type="term" value="C:transcription regulator complex"/>
    <property type="evidence" value="ECO:0000318"/>
    <property type="project" value="GO_Central"/>
</dbReference>
<dbReference type="GO" id="GO:0072359">
    <property type="term" value="P:circulatory system development"/>
    <property type="evidence" value="ECO:0000315"/>
    <property type="project" value="ZFIN"/>
</dbReference>
<dbReference type="GO" id="GO:0050768">
    <property type="term" value="P:negative regulation of neurogenesis"/>
    <property type="evidence" value="ECO:0000315"/>
    <property type="project" value="ZFIN"/>
</dbReference>
<dbReference type="GO" id="GO:0043473">
    <property type="term" value="P:pigmentation"/>
    <property type="evidence" value="ECO:0000315"/>
    <property type="project" value="ZFIN"/>
</dbReference>
<dbReference type="GO" id="GO:0010628">
    <property type="term" value="P:positive regulation of gene expression"/>
    <property type="evidence" value="ECO:0000318"/>
    <property type="project" value="GO_Central"/>
</dbReference>
<dbReference type="GO" id="GO:0006357">
    <property type="term" value="P:regulation of transcription by RNA polymerase II"/>
    <property type="evidence" value="ECO:0000318"/>
    <property type="project" value="GO_Central"/>
</dbReference>
<dbReference type="InterPro" id="IPR021629">
    <property type="entry name" value="Mediator_Med23"/>
</dbReference>
<dbReference type="PANTHER" id="PTHR12691">
    <property type="entry name" value="MEDIATOR OF RNA POLYMERASE II TRANSCRIPTION SUBUNIT 23"/>
    <property type="match status" value="1"/>
</dbReference>
<dbReference type="PANTHER" id="PTHR12691:SF10">
    <property type="entry name" value="MEDIATOR OF RNA POLYMERASE II TRANSCRIPTION SUBUNIT 23"/>
    <property type="match status" value="1"/>
</dbReference>
<dbReference type="Pfam" id="PF11573">
    <property type="entry name" value="Med23"/>
    <property type="match status" value="1"/>
</dbReference>
<comment type="function">
    <text evidence="1">Component of the Mediator complex, a coactivator involved in the regulated transcription of nearly all RNA polymerase II-dependent genes. Mediator functions as a bridge to convey information from gene-specific regulatory proteins to the basal RNA polymerase II transcription machinery. Mediator is recruited to promoters by direct interactions with regulatory proteins and serves as a scaffold for the assembly of a functional preinitiation complex with RNA polymerase II and the general transcription factors (By similarity).</text>
</comment>
<comment type="subunit">
    <text evidence="1">Component of the Mediator complex.</text>
</comment>
<comment type="subcellular location">
    <subcellularLocation>
        <location evidence="4">Nucleus</location>
    </subcellularLocation>
</comment>
<comment type="alternative products">
    <event type="alternative splicing"/>
    <isoform>
        <id>Q5RIW8-1</id>
        <name>1</name>
        <sequence type="displayed"/>
    </isoform>
    <isoform>
        <id>Q5RIW8-2</id>
        <name>2</name>
        <sequence type="described" ref="VSP_028386"/>
    </isoform>
</comment>
<comment type="similarity">
    <text evidence="4">Belongs to the Mediator complex subunit 23 family.</text>
</comment>
<keyword id="KW-0010">Activator</keyword>
<keyword id="KW-0025">Alternative splicing</keyword>
<keyword id="KW-0539">Nucleus</keyword>
<keyword id="KW-1185">Reference proteome</keyword>
<keyword id="KW-0804">Transcription</keyword>
<keyword id="KW-0805">Transcription regulation</keyword>
<reference key="1">
    <citation type="journal article" date="2013" name="Nature">
        <title>The zebrafish reference genome sequence and its relationship to the human genome.</title>
        <authorList>
            <person name="Howe K."/>
            <person name="Clark M.D."/>
            <person name="Torroja C.F."/>
            <person name="Torrance J."/>
            <person name="Berthelot C."/>
            <person name="Muffato M."/>
            <person name="Collins J.E."/>
            <person name="Humphray S."/>
            <person name="McLaren K."/>
            <person name="Matthews L."/>
            <person name="McLaren S."/>
            <person name="Sealy I."/>
            <person name="Caccamo M."/>
            <person name="Churcher C."/>
            <person name="Scott C."/>
            <person name="Barrett J.C."/>
            <person name="Koch R."/>
            <person name="Rauch G.J."/>
            <person name="White S."/>
            <person name="Chow W."/>
            <person name="Kilian B."/>
            <person name="Quintais L.T."/>
            <person name="Guerra-Assuncao J.A."/>
            <person name="Zhou Y."/>
            <person name="Gu Y."/>
            <person name="Yen J."/>
            <person name="Vogel J.H."/>
            <person name="Eyre T."/>
            <person name="Redmond S."/>
            <person name="Banerjee R."/>
            <person name="Chi J."/>
            <person name="Fu B."/>
            <person name="Langley E."/>
            <person name="Maguire S.F."/>
            <person name="Laird G.K."/>
            <person name="Lloyd D."/>
            <person name="Kenyon E."/>
            <person name="Donaldson S."/>
            <person name="Sehra H."/>
            <person name="Almeida-King J."/>
            <person name="Loveland J."/>
            <person name="Trevanion S."/>
            <person name="Jones M."/>
            <person name="Quail M."/>
            <person name="Willey D."/>
            <person name="Hunt A."/>
            <person name="Burton J."/>
            <person name="Sims S."/>
            <person name="McLay K."/>
            <person name="Plumb B."/>
            <person name="Davis J."/>
            <person name="Clee C."/>
            <person name="Oliver K."/>
            <person name="Clark R."/>
            <person name="Riddle C."/>
            <person name="Elliot D."/>
            <person name="Threadgold G."/>
            <person name="Harden G."/>
            <person name="Ware D."/>
            <person name="Begum S."/>
            <person name="Mortimore B."/>
            <person name="Kerry G."/>
            <person name="Heath P."/>
            <person name="Phillimore B."/>
            <person name="Tracey A."/>
            <person name="Corby N."/>
            <person name="Dunn M."/>
            <person name="Johnson C."/>
            <person name="Wood J."/>
            <person name="Clark S."/>
            <person name="Pelan S."/>
            <person name="Griffiths G."/>
            <person name="Smith M."/>
            <person name="Glithero R."/>
            <person name="Howden P."/>
            <person name="Barker N."/>
            <person name="Lloyd C."/>
            <person name="Stevens C."/>
            <person name="Harley J."/>
            <person name="Holt K."/>
            <person name="Panagiotidis G."/>
            <person name="Lovell J."/>
            <person name="Beasley H."/>
            <person name="Henderson C."/>
            <person name="Gordon D."/>
            <person name="Auger K."/>
            <person name="Wright D."/>
            <person name="Collins J."/>
            <person name="Raisen C."/>
            <person name="Dyer L."/>
            <person name="Leung K."/>
            <person name="Robertson L."/>
            <person name="Ambridge K."/>
            <person name="Leongamornlert D."/>
            <person name="McGuire S."/>
            <person name="Gilderthorp R."/>
            <person name="Griffiths C."/>
            <person name="Manthravadi D."/>
            <person name="Nichol S."/>
            <person name="Barker G."/>
            <person name="Whitehead S."/>
            <person name="Kay M."/>
            <person name="Brown J."/>
            <person name="Murnane C."/>
            <person name="Gray E."/>
            <person name="Humphries M."/>
            <person name="Sycamore N."/>
            <person name="Barker D."/>
            <person name="Saunders D."/>
            <person name="Wallis J."/>
            <person name="Babbage A."/>
            <person name="Hammond S."/>
            <person name="Mashreghi-Mohammadi M."/>
            <person name="Barr L."/>
            <person name="Martin S."/>
            <person name="Wray P."/>
            <person name="Ellington A."/>
            <person name="Matthews N."/>
            <person name="Ellwood M."/>
            <person name="Woodmansey R."/>
            <person name="Clark G."/>
            <person name="Cooper J."/>
            <person name="Tromans A."/>
            <person name="Grafham D."/>
            <person name="Skuce C."/>
            <person name="Pandian R."/>
            <person name="Andrews R."/>
            <person name="Harrison E."/>
            <person name="Kimberley A."/>
            <person name="Garnett J."/>
            <person name="Fosker N."/>
            <person name="Hall R."/>
            <person name="Garner P."/>
            <person name="Kelly D."/>
            <person name="Bird C."/>
            <person name="Palmer S."/>
            <person name="Gehring I."/>
            <person name="Berger A."/>
            <person name="Dooley C.M."/>
            <person name="Ersan-Urun Z."/>
            <person name="Eser C."/>
            <person name="Geiger H."/>
            <person name="Geisler M."/>
            <person name="Karotki L."/>
            <person name="Kirn A."/>
            <person name="Konantz J."/>
            <person name="Konantz M."/>
            <person name="Oberlander M."/>
            <person name="Rudolph-Geiger S."/>
            <person name="Teucke M."/>
            <person name="Lanz C."/>
            <person name="Raddatz G."/>
            <person name="Osoegawa K."/>
            <person name="Zhu B."/>
            <person name="Rapp A."/>
            <person name="Widaa S."/>
            <person name="Langford C."/>
            <person name="Yang F."/>
            <person name="Schuster S.C."/>
            <person name="Carter N.P."/>
            <person name="Harrow J."/>
            <person name="Ning Z."/>
            <person name="Herrero J."/>
            <person name="Searle S.M."/>
            <person name="Enright A."/>
            <person name="Geisler R."/>
            <person name="Plasterk R.H."/>
            <person name="Lee C."/>
            <person name="Westerfield M."/>
            <person name="de Jong P.J."/>
            <person name="Zon L.I."/>
            <person name="Postlethwait J.H."/>
            <person name="Nusslein-Volhard C."/>
            <person name="Hubbard T.J."/>
            <person name="Roest Crollius H."/>
            <person name="Rogers J."/>
            <person name="Stemple D.L."/>
        </authorList>
    </citation>
    <scope>NUCLEOTIDE SEQUENCE [LARGE SCALE GENOMIC DNA]</scope>
    <source>
        <strain>Tuebingen</strain>
    </source>
</reference>
<reference key="2">
    <citation type="submission" date="2004-08" db="EMBL/GenBank/DDBJ databases">
        <authorList>
            <consortium name="NIH - Zebrafish Gene Collection (ZGC) project"/>
        </authorList>
    </citation>
    <scope>NUCLEOTIDE SEQUENCE [LARGE SCALE MRNA] (ISOFORM 2)</scope>
</reference>
<name>MED23_DANRE</name>
<accession>Q5RIW8</accession>
<accession>B8A4G5</accession>
<accession>Q68EG9</accession>
<evidence type="ECO:0000250" key="1"/>
<evidence type="ECO:0000256" key="2">
    <source>
        <dbReference type="SAM" id="MobiDB-lite"/>
    </source>
</evidence>
<evidence type="ECO:0000303" key="3">
    <source ref="2"/>
</evidence>
<evidence type="ECO:0000305" key="4"/>
<gene>
    <name type="primary">med23</name>
    <name type="synonym">crsp3</name>
    <name type="ORF">si:ch211-272f15.2</name>
    <name type="ORF">zgc:91979</name>
</gene>
<proteinExistence type="evidence at transcript level"/>
<protein>
    <recommendedName>
        <fullName>Mediator of RNA polymerase II transcription subunit 23</fullName>
    </recommendedName>
    <alternativeName>
        <fullName>Cofactor required for Sp1 transcriptional activation subunit 3</fullName>
        <shortName>CRSP complex subunit 3</shortName>
    </alternativeName>
    <alternativeName>
        <fullName>Mediator complex subunit 23</fullName>
    </alternativeName>
</protein>